<gene>
    <name evidence="12" type="primary">Eci3</name>
</gene>
<dbReference type="EC" id="5.3.3.8" evidence="5"/>
<dbReference type="EMBL" id="FJ687155">
    <property type="protein sequence ID" value="ACV81748.1"/>
    <property type="molecule type" value="mRNA"/>
</dbReference>
<dbReference type="EMBL" id="AK131590">
    <property type="protein sequence ID" value="BAE20705.1"/>
    <property type="molecule type" value="mRNA"/>
</dbReference>
<dbReference type="EMBL" id="AC124537">
    <property type="status" value="NOT_ANNOTATED_CDS"/>
    <property type="molecule type" value="Genomic_DNA"/>
</dbReference>
<dbReference type="EMBL" id="CH466546">
    <property type="protein sequence ID" value="EDL40898.1"/>
    <property type="molecule type" value="Genomic_DNA"/>
</dbReference>
<dbReference type="EMBL" id="CH466546">
    <property type="protein sequence ID" value="EDL40899.1"/>
    <property type="molecule type" value="Genomic_DNA"/>
</dbReference>
<dbReference type="EMBL" id="BC014724">
    <property type="protein sequence ID" value="AAH14724.1"/>
    <property type="molecule type" value="mRNA"/>
</dbReference>
<dbReference type="CCDS" id="CCDS26449.1"/>
<dbReference type="RefSeq" id="NP_001405475.1">
    <property type="nucleotide sequence ID" value="NM_001418546.1"/>
</dbReference>
<dbReference type="RefSeq" id="NP_081223.1">
    <property type="nucleotide sequence ID" value="NM_026947.5"/>
</dbReference>
<dbReference type="RefSeq" id="XP_006516828.1">
    <property type="nucleotide sequence ID" value="XM_006516765.3"/>
</dbReference>
<dbReference type="SMR" id="Q78JN3"/>
<dbReference type="FunCoup" id="Q78JN3">
    <property type="interactions" value="768"/>
</dbReference>
<dbReference type="STRING" id="10090.ENSMUSP00000021853"/>
<dbReference type="SwissLipids" id="SLP:000001193"/>
<dbReference type="iPTMnet" id="Q78JN3"/>
<dbReference type="PhosphoSitePlus" id="Q78JN3"/>
<dbReference type="SwissPalm" id="Q78JN3"/>
<dbReference type="jPOST" id="Q78JN3"/>
<dbReference type="PaxDb" id="10090-ENSMUSP00000021853"/>
<dbReference type="ProteomicsDB" id="275436"/>
<dbReference type="DNASU" id="69123"/>
<dbReference type="Ensembl" id="ENSMUST00000021853.12">
    <property type="protein sequence ID" value="ENSMUSP00000021853.6"/>
    <property type="gene ID" value="ENSMUSG00000021416.12"/>
</dbReference>
<dbReference type="GeneID" id="69123"/>
<dbReference type="KEGG" id="mmu:69123"/>
<dbReference type="UCSC" id="uc007qbv.1">
    <property type="organism name" value="mouse"/>
</dbReference>
<dbReference type="AGR" id="MGI:1916373"/>
<dbReference type="CTD" id="69123"/>
<dbReference type="MGI" id="MGI:1916373">
    <property type="gene designation" value="Eci3"/>
</dbReference>
<dbReference type="VEuPathDB" id="HostDB:ENSMUSG00000021416"/>
<dbReference type="eggNOG" id="KOG0016">
    <property type="taxonomic scope" value="Eukaryota"/>
</dbReference>
<dbReference type="eggNOG" id="KOG0817">
    <property type="taxonomic scope" value="Eukaryota"/>
</dbReference>
<dbReference type="GeneTree" id="ENSGT00940000155105"/>
<dbReference type="InParanoid" id="Q78JN3"/>
<dbReference type="OMA" id="CTPETYL"/>
<dbReference type="OrthoDB" id="409763at2759"/>
<dbReference type="PhylomeDB" id="Q78JN3"/>
<dbReference type="TreeFam" id="TF313375"/>
<dbReference type="BRENDA" id="5.3.3.8">
    <property type="organism ID" value="3474"/>
</dbReference>
<dbReference type="BioGRID-ORCS" id="69123">
    <property type="hits" value="0 hits in 78 CRISPR screens"/>
</dbReference>
<dbReference type="PRO" id="PR:Q78JN3"/>
<dbReference type="Proteomes" id="UP000000589">
    <property type="component" value="Chromosome 13"/>
</dbReference>
<dbReference type="RNAct" id="Q78JN3">
    <property type="molecule type" value="protein"/>
</dbReference>
<dbReference type="Bgee" id="ENSMUSG00000021416">
    <property type="expression patterns" value="Expressed in right kidney and 68 other cell types or tissues"/>
</dbReference>
<dbReference type="ExpressionAtlas" id="Q78JN3">
    <property type="expression patterns" value="baseline and differential"/>
</dbReference>
<dbReference type="GO" id="GO:0005777">
    <property type="term" value="C:peroxisome"/>
    <property type="evidence" value="ECO:0000314"/>
    <property type="project" value="MGI"/>
</dbReference>
<dbReference type="GO" id="GO:0004165">
    <property type="term" value="F:delta(3)-delta(2)-enoyl-CoA isomerase activity"/>
    <property type="evidence" value="ECO:0000314"/>
    <property type="project" value="MGI"/>
</dbReference>
<dbReference type="GO" id="GO:0000062">
    <property type="term" value="F:fatty-acyl-CoA binding"/>
    <property type="evidence" value="ECO:0007669"/>
    <property type="project" value="InterPro"/>
</dbReference>
<dbReference type="GO" id="GO:0006635">
    <property type="term" value="P:fatty acid beta-oxidation"/>
    <property type="evidence" value="ECO:0000305"/>
    <property type="project" value="MGI"/>
</dbReference>
<dbReference type="CDD" id="cd06558">
    <property type="entry name" value="crotonase-like"/>
    <property type="match status" value="1"/>
</dbReference>
<dbReference type="FunFam" id="1.10.12.10:FF:000013">
    <property type="entry name" value="Enoyl-CoA delta isomerase 2, mitochondrial"/>
    <property type="match status" value="1"/>
</dbReference>
<dbReference type="FunFam" id="3.90.226.10:FF:000084">
    <property type="entry name" value="Enoyl-CoA delta isomerase 2, mitochondrial"/>
    <property type="match status" value="1"/>
</dbReference>
<dbReference type="Gene3D" id="1.20.80.10">
    <property type="match status" value="1"/>
</dbReference>
<dbReference type="Gene3D" id="3.90.226.10">
    <property type="entry name" value="2-enoyl-CoA Hydratase, Chain A, domain 1"/>
    <property type="match status" value="1"/>
</dbReference>
<dbReference type="Gene3D" id="1.10.12.10">
    <property type="entry name" value="Lyase 2-enoyl-coa Hydratase, Chain A, domain 2"/>
    <property type="match status" value="1"/>
</dbReference>
<dbReference type="InterPro" id="IPR000582">
    <property type="entry name" value="Acyl-CoA-binding_protein"/>
</dbReference>
<dbReference type="InterPro" id="IPR035984">
    <property type="entry name" value="Acyl-CoA-binding_sf"/>
</dbReference>
<dbReference type="InterPro" id="IPR029045">
    <property type="entry name" value="ClpP/crotonase-like_dom_sf"/>
</dbReference>
<dbReference type="InterPro" id="IPR051053">
    <property type="entry name" value="ECH/Chromodomain_protein"/>
</dbReference>
<dbReference type="InterPro" id="IPR001753">
    <property type="entry name" value="Enoyl-CoA_hydra/iso"/>
</dbReference>
<dbReference type="InterPro" id="IPR014748">
    <property type="entry name" value="Enoyl-CoA_hydra_C"/>
</dbReference>
<dbReference type="InterPro" id="IPR014352">
    <property type="entry name" value="FERM/acyl-CoA-bd_prot_sf"/>
</dbReference>
<dbReference type="PANTHER" id="PTHR43684">
    <property type="match status" value="1"/>
</dbReference>
<dbReference type="PANTHER" id="PTHR43684:SF1">
    <property type="entry name" value="ENOYL-COA DELTA ISOMERASE 2"/>
    <property type="match status" value="1"/>
</dbReference>
<dbReference type="Pfam" id="PF00887">
    <property type="entry name" value="ACBP"/>
    <property type="match status" value="1"/>
</dbReference>
<dbReference type="Pfam" id="PF00378">
    <property type="entry name" value="ECH_1"/>
    <property type="match status" value="1"/>
</dbReference>
<dbReference type="SUPFAM" id="SSF47027">
    <property type="entry name" value="Acyl-CoA binding protein"/>
    <property type="match status" value="1"/>
</dbReference>
<dbReference type="SUPFAM" id="SSF52096">
    <property type="entry name" value="ClpP/crotonase"/>
    <property type="match status" value="1"/>
</dbReference>
<dbReference type="PROSITE" id="PS51228">
    <property type="entry name" value="ACB_2"/>
    <property type="match status" value="1"/>
</dbReference>
<evidence type="ECO:0000250" key="1">
    <source>
        <dbReference type="UniProtKB" id="Q05871"/>
    </source>
</evidence>
<evidence type="ECO:0000255" key="2"/>
<evidence type="ECO:0000255" key="3">
    <source>
        <dbReference type="PROSITE-ProRule" id="PRU00573"/>
    </source>
</evidence>
<evidence type="ECO:0000256" key="4">
    <source>
        <dbReference type="SAM" id="MobiDB-lite"/>
    </source>
</evidence>
<evidence type="ECO:0000269" key="5">
    <source>
    </source>
</evidence>
<evidence type="ECO:0000305" key="6"/>
<evidence type="ECO:0000305" key="7">
    <source>
    </source>
</evidence>
<evidence type="ECO:0000312" key="8">
    <source>
        <dbReference type="EMBL" id="AAH14724.1"/>
    </source>
</evidence>
<evidence type="ECO:0000312" key="9">
    <source>
        <dbReference type="EMBL" id="ACV81748.1"/>
    </source>
</evidence>
<evidence type="ECO:0000312" key="10">
    <source>
        <dbReference type="EMBL" id="BAE20705.1"/>
    </source>
</evidence>
<evidence type="ECO:0000312" key="11">
    <source>
        <dbReference type="EMBL" id="EDL40898.1"/>
    </source>
</evidence>
<evidence type="ECO:0000312" key="12">
    <source>
        <dbReference type="MGI" id="MGI:1916373"/>
    </source>
</evidence>
<evidence type="ECO:0000312" key="13">
    <source>
        <dbReference type="Proteomes" id="UP000000589"/>
    </source>
</evidence>
<protein>
    <recommendedName>
        <fullName evidence="6">Enoyl-CoA delta isomerase 3, peroxisomal</fullName>
        <ecNumber evidence="5">5.3.3.8</ecNumber>
    </recommendedName>
    <alternativeName>
        <fullName evidence="6">Delta(3),delta(2)-enoyl-CoA isomerase</fullName>
        <shortName evidence="6">D3,D2-enoyl-CoA isomerase</shortName>
    </alternativeName>
    <alternativeName>
        <fullName evidence="6">Dodecenoyl-CoA isomerase</fullName>
    </alternativeName>
</protein>
<feature type="chain" id="PRO_0000435335" description="Enoyl-CoA delta isomerase 3, peroxisomal">
    <location>
        <begin position="1"/>
        <end position="317"/>
    </location>
</feature>
<feature type="domain" description="ACB" evidence="3">
    <location>
        <begin position="1"/>
        <end position="46"/>
    </location>
</feature>
<feature type="region of interest" description="Disordered" evidence="4">
    <location>
        <begin position="40"/>
        <end position="60"/>
    </location>
</feature>
<feature type="short sequence motif" description="Microbody targeting signal" evidence="2">
    <location>
        <begin position="315"/>
        <end position="317"/>
    </location>
</feature>
<feature type="binding site" evidence="1">
    <location>
        <begin position="120"/>
        <end position="124"/>
    </location>
    <ligand>
        <name>substrate</name>
    </ligand>
</feature>
<feature type="site" description="Important for catalytic activity" evidence="1">
    <location>
        <position position="201"/>
    </location>
</feature>
<feature type="sequence conflict" description="In Ref. 1; ACV81748." evidence="6" ref="1">
    <original>I</original>
    <variation>V</variation>
    <location>
        <position position="108"/>
    </location>
</feature>
<feature type="sequence conflict" description="In Ref. 1; ACV81748." evidence="6" ref="1">
    <original>T</original>
    <variation>P</variation>
    <location>
        <position position="257"/>
    </location>
</feature>
<reference evidence="9" key="1">
    <citation type="submission" date="2009-02" db="EMBL/GenBank/DDBJ databases">
        <authorList>
            <person name="Zheng L."/>
            <person name="Zeng F."/>
            <person name="Tong Q."/>
        </authorList>
    </citation>
    <scope>NUCLEOTIDE SEQUENCE [MRNA]</scope>
    <source>
        <strain evidence="9">BALB/cJ</strain>
        <tissue evidence="9">Kidney</tissue>
    </source>
</reference>
<reference evidence="10" key="2">
    <citation type="journal article" date="2005" name="Science">
        <title>The transcriptional landscape of the mammalian genome.</title>
        <authorList>
            <person name="Carninci P."/>
            <person name="Kasukawa T."/>
            <person name="Katayama S."/>
            <person name="Gough J."/>
            <person name="Frith M.C."/>
            <person name="Maeda N."/>
            <person name="Oyama R."/>
            <person name="Ravasi T."/>
            <person name="Lenhard B."/>
            <person name="Wells C."/>
            <person name="Kodzius R."/>
            <person name="Shimokawa K."/>
            <person name="Bajic V.B."/>
            <person name="Brenner S.E."/>
            <person name="Batalov S."/>
            <person name="Forrest A.R."/>
            <person name="Zavolan M."/>
            <person name="Davis M.J."/>
            <person name="Wilming L.G."/>
            <person name="Aidinis V."/>
            <person name="Allen J.E."/>
            <person name="Ambesi-Impiombato A."/>
            <person name="Apweiler R."/>
            <person name="Aturaliya R.N."/>
            <person name="Bailey T.L."/>
            <person name="Bansal M."/>
            <person name="Baxter L."/>
            <person name="Beisel K.W."/>
            <person name="Bersano T."/>
            <person name="Bono H."/>
            <person name="Chalk A.M."/>
            <person name="Chiu K.P."/>
            <person name="Choudhary V."/>
            <person name="Christoffels A."/>
            <person name="Clutterbuck D.R."/>
            <person name="Crowe M.L."/>
            <person name="Dalla E."/>
            <person name="Dalrymple B.P."/>
            <person name="de Bono B."/>
            <person name="Della Gatta G."/>
            <person name="di Bernardo D."/>
            <person name="Down T."/>
            <person name="Engstrom P."/>
            <person name="Fagiolini M."/>
            <person name="Faulkner G."/>
            <person name="Fletcher C.F."/>
            <person name="Fukushima T."/>
            <person name="Furuno M."/>
            <person name="Futaki S."/>
            <person name="Gariboldi M."/>
            <person name="Georgii-Hemming P."/>
            <person name="Gingeras T.R."/>
            <person name="Gojobori T."/>
            <person name="Green R.E."/>
            <person name="Gustincich S."/>
            <person name="Harbers M."/>
            <person name="Hayashi Y."/>
            <person name="Hensch T.K."/>
            <person name="Hirokawa N."/>
            <person name="Hill D."/>
            <person name="Huminiecki L."/>
            <person name="Iacono M."/>
            <person name="Ikeo K."/>
            <person name="Iwama A."/>
            <person name="Ishikawa T."/>
            <person name="Jakt M."/>
            <person name="Kanapin A."/>
            <person name="Katoh M."/>
            <person name="Kawasawa Y."/>
            <person name="Kelso J."/>
            <person name="Kitamura H."/>
            <person name="Kitano H."/>
            <person name="Kollias G."/>
            <person name="Krishnan S.P."/>
            <person name="Kruger A."/>
            <person name="Kummerfeld S.K."/>
            <person name="Kurochkin I.V."/>
            <person name="Lareau L.F."/>
            <person name="Lazarevic D."/>
            <person name="Lipovich L."/>
            <person name="Liu J."/>
            <person name="Liuni S."/>
            <person name="McWilliam S."/>
            <person name="Madan Babu M."/>
            <person name="Madera M."/>
            <person name="Marchionni L."/>
            <person name="Matsuda H."/>
            <person name="Matsuzawa S."/>
            <person name="Miki H."/>
            <person name="Mignone F."/>
            <person name="Miyake S."/>
            <person name="Morris K."/>
            <person name="Mottagui-Tabar S."/>
            <person name="Mulder N."/>
            <person name="Nakano N."/>
            <person name="Nakauchi H."/>
            <person name="Ng P."/>
            <person name="Nilsson R."/>
            <person name="Nishiguchi S."/>
            <person name="Nishikawa S."/>
            <person name="Nori F."/>
            <person name="Ohara O."/>
            <person name="Okazaki Y."/>
            <person name="Orlando V."/>
            <person name="Pang K.C."/>
            <person name="Pavan W.J."/>
            <person name="Pavesi G."/>
            <person name="Pesole G."/>
            <person name="Petrovsky N."/>
            <person name="Piazza S."/>
            <person name="Reed J."/>
            <person name="Reid J.F."/>
            <person name="Ring B.Z."/>
            <person name="Ringwald M."/>
            <person name="Rost B."/>
            <person name="Ruan Y."/>
            <person name="Salzberg S.L."/>
            <person name="Sandelin A."/>
            <person name="Schneider C."/>
            <person name="Schoenbach C."/>
            <person name="Sekiguchi K."/>
            <person name="Semple C.A."/>
            <person name="Seno S."/>
            <person name="Sessa L."/>
            <person name="Sheng Y."/>
            <person name="Shibata Y."/>
            <person name="Shimada H."/>
            <person name="Shimada K."/>
            <person name="Silva D."/>
            <person name="Sinclair B."/>
            <person name="Sperling S."/>
            <person name="Stupka E."/>
            <person name="Sugiura K."/>
            <person name="Sultana R."/>
            <person name="Takenaka Y."/>
            <person name="Taki K."/>
            <person name="Tammoja K."/>
            <person name="Tan S.L."/>
            <person name="Tang S."/>
            <person name="Taylor M.S."/>
            <person name="Tegner J."/>
            <person name="Teichmann S.A."/>
            <person name="Ueda H.R."/>
            <person name="van Nimwegen E."/>
            <person name="Verardo R."/>
            <person name="Wei C.L."/>
            <person name="Yagi K."/>
            <person name="Yamanishi H."/>
            <person name="Zabarovsky E."/>
            <person name="Zhu S."/>
            <person name="Zimmer A."/>
            <person name="Hide W."/>
            <person name="Bult C."/>
            <person name="Grimmond S.M."/>
            <person name="Teasdale R.D."/>
            <person name="Liu E.T."/>
            <person name="Brusic V."/>
            <person name="Quackenbush J."/>
            <person name="Wahlestedt C."/>
            <person name="Mattick J.S."/>
            <person name="Hume D.A."/>
            <person name="Kai C."/>
            <person name="Sasaki D."/>
            <person name="Tomaru Y."/>
            <person name="Fukuda S."/>
            <person name="Kanamori-Katayama M."/>
            <person name="Suzuki M."/>
            <person name="Aoki J."/>
            <person name="Arakawa T."/>
            <person name="Iida J."/>
            <person name="Imamura K."/>
            <person name="Itoh M."/>
            <person name="Kato T."/>
            <person name="Kawaji H."/>
            <person name="Kawagashira N."/>
            <person name="Kawashima T."/>
            <person name="Kojima M."/>
            <person name="Kondo S."/>
            <person name="Konno H."/>
            <person name="Nakano K."/>
            <person name="Ninomiya N."/>
            <person name="Nishio T."/>
            <person name="Okada M."/>
            <person name="Plessy C."/>
            <person name="Shibata K."/>
            <person name="Shiraki T."/>
            <person name="Suzuki S."/>
            <person name="Tagami M."/>
            <person name="Waki K."/>
            <person name="Watahiki A."/>
            <person name="Okamura-Oho Y."/>
            <person name="Suzuki H."/>
            <person name="Kawai J."/>
            <person name="Hayashizaki Y."/>
        </authorList>
    </citation>
    <scope>NUCLEOTIDE SEQUENCE [LARGE SCALE MRNA]</scope>
    <source>
        <strain evidence="10">C57BL/6J</strain>
        <tissue evidence="10">Kidney</tissue>
    </source>
</reference>
<reference evidence="13" key="3">
    <citation type="journal article" date="2009" name="PLoS Biol.">
        <title>Lineage-specific biology revealed by a finished genome assembly of the mouse.</title>
        <authorList>
            <person name="Church D.M."/>
            <person name="Goodstadt L."/>
            <person name="Hillier L.W."/>
            <person name="Zody M.C."/>
            <person name="Goldstein S."/>
            <person name="She X."/>
            <person name="Bult C.J."/>
            <person name="Agarwala R."/>
            <person name="Cherry J.L."/>
            <person name="DiCuccio M."/>
            <person name="Hlavina W."/>
            <person name="Kapustin Y."/>
            <person name="Meric P."/>
            <person name="Maglott D."/>
            <person name="Birtle Z."/>
            <person name="Marques A.C."/>
            <person name="Graves T."/>
            <person name="Zhou S."/>
            <person name="Teague B."/>
            <person name="Potamousis K."/>
            <person name="Churas C."/>
            <person name="Place M."/>
            <person name="Herschleb J."/>
            <person name="Runnheim R."/>
            <person name="Forrest D."/>
            <person name="Amos-Landgraf J."/>
            <person name="Schwartz D.C."/>
            <person name="Cheng Z."/>
            <person name="Lindblad-Toh K."/>
            <person name="Eichler E.E."/>
            <person name="Ponting C.P."/>
        </authorList>
    </citation>
    <scope>NUCLEOTIDE SEQUENCE [LARGE SCALE GENOMIC DNA]</scope>
    <source>
        <strain evidence="13">C57BL/6J</strain>
    </source>
</reference>
<reference evidence="11" key="4">
    <citation type="submission" date="2005-07" db="EMBL/GenBank/DDBJ databases">
        <authorList>
            <person name="Mural R.J."/>
            <person name="Adams M.D."/>
            <person name="Myers E.W."/>
            <person name="Smith H.O."/>
            <person name="Venter J.C."/>
        </authorList>
    </citation>
    <scope>NUCLEOTIDE SEQUENCE [LARGE SCALE GENOMIC DNA]</scope>
</reference>
<reference evidence="8" key="5">
    <citation type="journal article" date="2004" name="Genome Res.">
        <title>The status, quality, and expansion of the NIH full-length cDNA project: the Mammalian Gene Collection (MGC).</title>
        <authorList>
            <consortium name="The MGC Project Team"/>
        </authorList>
    </citation>
    <scope>NUCLEOTIDE SEQUENCE [LARGE SCALE MRNA]</scope>
    <source>
        <strain evidence="8">FVB/N</strain>
        <tissue evidence="8">Colon</tissue>
    </source>
</reference>
<reference key="6">
    <citation type="journal article" date="2010" name="Cell">
        <title>A tissue-specific atlas of mouse protein phosphorylation and expression.</title>
        <authorList>
            <person name="Huttlin E.L."/>
            <person name="Jedrychowski M.P."/>
            <person name="Elias J.E."/>
            <person name="Goswami T."/>
            <person name="Rad R."/>
            <person name="Beausoleil S.A."/>
            <person name="Villen J."/>
            <person name="Haas W."/>
            <person name="Sowa M.E."/>
            <person name="Gygi S.P."/>
        </authorList>
    </citation>
    <scope>IDENTIFICATION BY MASS SPECTROMETRY [LARGE SCALE ANALYSIS]</scope>
    <source>
        <tissue>Kidney</tissue>
    </source>
</reference>
<reference evidence="6" key="7">
    <citation type="journal article" date="2014" name="FASEB J.">
        <title>Identification and characterization of Eci3, a murine kidney-specific Delta3,Delta2-enoyl-CoA isomerase.</title>
        <authorList>
            <person name="van Weeghel M."/>
            <person name="Ofman R."/>
            <person name="Argmann C.A."/>
            <person name="Ruiter J.P."/>
            <person name="Claessen N."/>
            <person name="Oussoren S.V."/>
            <person name="Wanders R.J."/>
            <person name="Aten J."/>
            <person name="Houten S.M."/>
        </authorList>
    </citation>
    <scope>FUNCTION</scope>
    <scope>CATALYTIC ACTIVITY</scope>
    <scope>SUBCELLULAR LOCATION</scope>
    <scope>TISSUE SPECIFICITY</scope>
</reference>
<proteinExistence type="evidence at protein level"/>
<name>ECI3_MOUSE</name>
<comment type="function">
    <text evidence="5 6">Catalyzes the isomerization of trans-3-nonenoyl-CoA into trans-2-nonenoyl-CoA (PubMed:24344334). May also have activity towards other enoyl-CoA species (Probable).</text>
</comment>
<comment type="catalytic activity">
    <reaction evidence="5">
        <text>a (3Z)-enoyl-CoA = a 4-saturated (2E)-enoyl-CoA</text>
        <dbReference type="Rhea" id="RHEA:45900"/>
        <dbReference type="ChEBI" id="CHEBI:85097"/>
        <dbReference type="ChEBI" id="CHEBI:85489"/>
        <dbReference type="EC" id="5.3.3.8"/>
    </reaction>
    <physiologicalReaction direction="left-to-right" evidence="7">
        <dbReference type="Rhea" id="RHEA:45901"/>
    </physiologicalReaction>
</comment>
<comment type="catalytic activity">
    <reaction evidence="5">
        <text>a (3E)-enoyl-CoA = a 4-saturated (2E)-enoyl-CoA</text>
        <dbReference type="Rhea" id="RHEA:45228"/>
        <dbReference type="ChEBI" id="CHEBI:58521"/>
        <dbReference type="ChEBI" id="CHEBI:85097"/>
        <dbReference type="EC" id="5.3.3.8"/>
    </reaction>
    <physiologicalReaction direction="left-to-right" evidence="7">
        <dbReference type="Rhea" id="RHEA:45229"/>
    </physiologicalReaction>
</comment>
<comment type="catalytic activity">
    <reaction evidence="5">
        <text>(3E)-nonenoyl-CoA = (2E)-nonenoyl-CoA</text>
        <dbReference type="Rhea" id="RHEA:46068"/>
        <dbReference type="ChEBI" id="CHEBI:76292"/>
        <dbReference type="ChEBI" id="CHEBI:85655"/>
    </reaction>
    <physiologicalReaction direction="left-to-right" evidence="7">
        <dbReference type="Rhea" id="RHEA:46069"/>
    </physiologicalReaction>
</comment>
<comment type="subcellular location">
    <subcellularLocation>
        <location evidence="5">Peroxisome</location>
    </subcellularLocation>
</comment>
<comment type="tissue specificity">
    <text evidence="5">Expressed at high levels in the kidney. Also detected at very low levels in the duodenum, jejunum, ileum, heart, liver, lung, and brown adipose tissue (at protein level). In the kidney, expression seems to be localized mainly to the proximal tubule.</text>
</comment>
<comment type="domain">
    <text evidence="6">The ACB (acyl-CoA-binding) domain is truncated and may be non-functional.</text>
</comment>
<comment type="similarity">
    <text evidence="6">Belongs to the enoyl-CoA hydratase/isomerase family.</text>
</comment>
<accession>Q78JN3</accession>
<accession>D3U0D8</accession>
<keyword id="KW-0413">Isomerase</keyword>
<keyword id="KW-0576">Peroxisome</keyword>
<keyword id="KW-1185">Reference proteome</keyword>
<organism evidence="8">
    <name type="scientific">Mus musculus</name>
    <name type="common">Mouse</name>
    <dbReference type="NCBI Taxonomy" id="10090"/>
    <lineage>
        <taxon>Eukaryota</taxon>
        <taxon>Metazoa</taxon>
        <taxon>Chordata</taxon>
        <taxon>Craniata</taxon>
        <taxon>Vertebrata</taxon>
        <taxon>Euteleostomi</taxon>
        <taxon>Mammalia</taxon>
        <taxon>Eutheria</taxon>
        <taxon>Euarchontoglires</taxon>
        <taxon>Glires</taxon>
        <taxon>Rodentia</taxon>
        <taxon>Myomorpha</taxon>
        <taxon>Muroidea</taxon>
        <taxon>Muridae</taxon>
        <taxon>Murinae</taxon>
        <taxon>Mus</taxon>
        <taxon>Mus</taxon>
    </lineage>
</organism>
<sequence length="317" mass="35231">MPKPGVFNFVNKATWDARNALGSLPKETARKNYVDLVSSLSSSSEAPSQGKRGADEKARESKDILVTSEDGITKITFNRPTKKNAISFQMYLDIMHALKNASTDNSVITVFTGTGDYYSSGNDLKNLINDAGEIQDVVATSTKILREFVNCFIDFPKPLVAVVNGPAVGIAVTILALFDAVFASDRATFHTPFSQLSQIPEACSTYMFPKIMGPTKAAEMLLFGKKLTAREAWAQGLVTEVFPESTFETEVWTRLKTYSKLSPNVMRISKELIRKHEKQKLYTVNAEECAAALERMPREEYAKALRNFLFRKAKAKL</sequence>